<dbReference type="EMBL" id="AP009179">
    <property type="protein sequence ID" value="BAF71972.1"/>
    <property type="molecule type" value="Genomic_DNA"/>
</dbReference>
<dbReference type="RefSeq" id="WP_011980705.1">
    <property type="nucleotide sequence ID" value="NC_009663.1"/>
</dbReference>
<dbReference type="SMR" id="A6Q913"/>
<dbReference type="KEGG" id="sun:SUN_1015"/>
<dbReference type="eggNOG" id="COG1615">
    <property type="taxonomic scope" value="Bacteria"/>
</dbReference>
<dbReference type="HOGENOM" id="CLU_007733_0_0_7"/>
<dbReference type="OrthoDB" id="9763654at2"/>
<dbReference type="Proteomes" id="UP000006378">
    <property type="component" value="Chromosome"/>
</dbReference>
<dbReference type="GO" id="GO:0005576">
    <property type="term" value="C:extracellular region"/>
    <property type="evidence" value="ECO:0007669"/>
    <property type="project" value="TreeGrafter"/>
</dbReference>
<dbReference type="GO" id="GO:0005886">
    <property type="term" value="C:plasma membrane"/>
    <property type="evidence" value="ECO:0007669"/>
    <property type="project" value="UniProtKB-SubCell"/>
</dbReference>
<dbReference type="HAMAP" id="MF_01600">
    <property type="entry name" value="UPF0182"/>
    <property type="match status" value="1"/>
</dbReference>
<dbReference type="InterPro" id="IPR005372">
    <property type="entry name" value="UPF0182"/>
</dbReference>
<dbReference type="PANTHER" id="PTHR39344">
    <property type="entry name" value="UPF0182 PROTEIN SLL1060"/>
    <property type="match status" value="1"/>
</dbReference>
<dbReference type="PANTHER" id="PTHR39344:SF1">
    <property type="entry name" value="UPF0182 PROTEIN SLL1060"/>
    <property type="match status" value="1"/>
</dbReference>
<dbReference type="Pfam" id="PF03699">
    <property type="entry name" value="UPF0182"/>
    <property type="match status" value="1"/>
</dbReference>
<name>Y1015_SULNB</name>
<proteinExistence type="inferred from homology"/>
<sequence>MKKLKKPIIITALAIFTIYLFSLFVDYYGDWLWFKNMGYDSVFDTILLTKILSFILFFLIFILFSGIHIHFAYHGGSQSRNNIPLADDDPRQKILPLYQGKAVAWLWAVIILFFAIVMGSYASAYWHDFLKFIYPSSFDLKEPIFGKDAGFYIFTLPVYQFVVSWYLFMVVITFIGVLSSYYIDTAFNFTSRKFNITGKAKSHLTQLTAFFALGVSALYFIKLYNILYSSHGVAYGPSYMDVHAQIPAYWTILVMSLIITILLFFYPFYKKRKVIVSALGLWVLVWAGFVWIYPGIVEQYIVKPNELKKETPYILNNIKFTRTAFGLDNIKVKPFSVDQNITYKDILDNRHTIENIRLWDRRPLIQTYKQLQEIRLYYDFKNVQVDRYHFHKYTEVVLGARELPELGIPARAQTWVNNHLIYTHGYGVVMNPVNEITSDGMPELIVKDIPPTTSVNLNIKQMAIYYGEETNQFVLVNTRAKEFDYPKGDDNVYASYAGKGGVQISSLFRRLVYAWKFSDINILFTGYLTKQSRIMFHRNIMQRVATLAPFLSFDSQPYPVVGKDGKLYWIQDAYTTSNMFPYSEPLYHNPIERGINYINNSVKIVIDAYDGDVSFYVINPKDPLVQTYEKIYPKLFKPFSNMPGFLKAHIRYPTDLFNIQTKMYNVYHMTDPKVFYNQEDYWEIPNETYSRGEQKMFPYYIIMRLPDTKNEEFILMIPITPSKKDNMNAWLCARCDAPNYGELIVYTLPKDKLIYGPMQIQARINQQPDISSELTLWGQQGSRVIKGNQLVIPIKNSFIYVEPVYLQSEEGQIPELKRVIVAFKEKVEMRKTLDEALEAVFNVAPGQMANPQQSAGKHVGGRTVLSIEAHKALEHYNKAMDSLRQNDWANFGKELDEMKSVLLKMTQSETKSSGMPKVK</sequence>
<accession>A6Q913</accession>
<reference key="1">
    <citation type="journal article" date="2007" name="Proc. Natl. Acad. Sci. U.S.A.">
        <title>Deep-sea vent epsilon-proteobacterial genomes provide insights into emergence of pathogens.</title>
        <authorList>
            <person name="Nakagawa S."/>
            <person name="Takaki Y."/>
            <person name="Shimamura S."/>
            <person name="Reysenbach A.-L."/>
            <person name="Takai K."/>
            <person name="Horikoshi K."/>
        </authorList>
    </citation>
    <scope>NUCLEOTIDE SEQUENCE [LARGE SCALE GENOMIC DNA]</scope>
    <source>
        <strain>NBC37-1</strain>
    </source>
</reference>
<organism>
    <name type="scientific">Sulfurovum sp. (strain NBC37-1)</name>
    <dbReference type="NCBI Taxonomy" id="387093"/>
    <lineage>
        <taxon>Bacteria</taxon>
        <taxon>Pseudomonadati</taxon>
        <taxon>Campylobacterota</taxon>
        <taxon>Epsilonproteobacteria</taxon>
        <taxon>Campylobacterales</taxon>
        <taxon>Sulfurovaceae</taxon>
        <taxon>Sulfurovum</taxon>
    </lineage>
</organism>
<comment type="subcellular location">
    <subcellularLocation>
        <location evidence="1">Cell membrane</location>
        <topology evidence="1">Multi-pass membrane protein</topology>
    </subcellularLocation>
</comment>
<comment type="similarity">
    <text evidence="1">Belongs to the UPF0182 family.</text>
</comment>
<protein>
    <recommendedName>
        <fullName evidence="1">UPF0182 protein SUN_1015</fullName>
    </recommendedName>
</protein>
<evidence type="ECO:0000255" key="1">
    <source>
        <dbReference type="HAMAP-Rule" id="MF_01600"/>
    </source>
</evidence>
<keyword id="KW-1003">Cell membrane</keyword>
<keyword id="KW-0472">Membrane</keyword>
<keyword id="KW-0812">Transmembrane</keyword>
<keyword id="KW-1133">Transmembrane helix</keyword>
<gene>
    <name type="ordered locus">SUN_1015</name>
</gene>
<feature type="chain" id="PRO_0000335552" description="UPF0182 protein SUN_1015">
    <location>
        <begin position="1"/>
        <end position="919"/>
    </location>
</feature>
<feature type="transmembrane region" description="Helical" evidence="1">
    <location>
        <begin position="8"/>
        <end position="28"/>
    </location>
</feature>
<feature type="transmembrane region" description="Helical" evidence="1">
    <location>
        <begin position="51"/>
        <end position="71"/>
    </location>
</feature>
<feature type="transmembrane region" description="Helical" evidence="1">
    <location>
        <begin position="102"/>
        <end position="122"/>
    </location>
</feature>
<feature type="transmembrane region" description="Helical" evidence="1">
    <location>
        <begin position="158"/>
        <end position="178"/>
    </location>
</feature>
<feature type="transmembrane region" description="Helical" evidence="1">
    <location>
        <begin position="207"/>
        <end position="227"/>
    </location>
</feature>
<feature type="transmembrane region" description="Helical" evidence="1">
    <location>
        <begin position="246"/>
        <end position="266"/>
    </location>
</feature>
<feature type="transmembrane region" description="Helical" evidence="1">
    <location>
        <begin position="274"/>
        <end position="294"/>
    </location>
</feature>